<accession>P53522</accession>
<accession>B4F039</accession>
<sequence>MILNKKNIHSKSVMLFCAGIVSLMPLHAIAYLQGEVRTNGGPNIFYAVLDHTTFPNNKAGELATVNFSLPDRYDGTVYCPNSRIYDRALTYFKATTDLPPVGNNFYQLNEYVDIKINFEIWGPNPLPTVPFSDIPNNRNNQQGCRVPSSPKPHISSGSSGQLTFRLRKPIINGVSLNGQSLAQMYAMVSHSGAPKTYGSEPISKLVITSGIITTKDKCIFNNGSPITFDFGNVGNTSDYLNGQNYKITRNIPIKCEGGSFTDPNSRIMFKVQTGSSGIASFDSNYLGTTGSVDRSNLGIVLRDKSGTIIPPNQYFSVGKLNNFNGNWEVSAAPIAKAGSKITEGEFSAHATLIAEFM</sequence>
<evidence type="ECO:0000255" key="1"/>
<gene>
    <name type="primary">pmfE</name>
    <name type="ordered locus">PMI1880</name>
</gene>
<dbReference type="EMBL" id="Z35428">
    <property type="protein sequence ID" value="CAA84592.1"/>
    <property type="molecule type" value="Genomic_DNA"/>
</dbReference>
<dbReference type="EMBL" id="AM942759">
    <property type="protein sequence ID" value="CAR43900.1"/>
    <property type="molecule type" value="Genomic_DNA"/>
</dbReference>
<dbReference type="RefSeq" id="WP_004248451.1">
    <property type="nucleotide sequence ID" value="NC_010554.1"/>
</dbReference>
<dbReference type="SMR" id="P53522"/>
<dbReference type="DNASU" id="6802406"/>
<dbReference type="EnsemblBacteria" id="CAR43900">
    <property type="protein sequence ID" value="CAR43900"/>
    <property type="gene ID" value="PMI1880"/>
</dbReference>
<dbReference type="GeneID" id="6802406"/>
<dbReference type="KEGG" id="pmr:PMI1880"/>
<dbReference type="PATRIC" id="fig|529507.6.peg.1832"/>
<dbReference type="eggNOG" id="COG3539">
    <property type="taxonomic scope" value="Bacteria"/>
</dbReference>
<dbReference type="HOGENOM" id="CLU_066608_0_1_6"/>
<dbReference type="Proteomes" id="UP000008319">
    <property type="component" value="Chromosome"/>
</dbReference>
<dbReference type="GO" id="GO:0009289">
    <property type="term" value="C:pilus"/>
    <property type="evidence" value="ECO:0007669"/>
    <property type="project" value="UniProtKB-SubCell"/>
</dbReference>
<dbReference type="GO" id="GO:0043709">
    <property type="term" value="P:cell adhesion involved in single-species biofilm formation"/>
    <property type="evidence" value="ECO:0007669"/>
    <property type="project" value="TreeGrafter"/>
</dbReference>
<dbReference type="Gene3D" id="2.60.40.1090">
    <property type="entry name" value="Fimbrial-type adhesion domain"/>
    <property type="match status" value="1"/>
</dbReference>
<dbReference type="InterPro" id="IPR000259">
    <property type="entry name" value="Adhesion_dom_fimbrial"/>
</dbReference>
<dbReference type="InterPro" id="IPR036937">
    <property type="entry name" value="Adhesion_dom_fimbrial_sf"/>
</dbReference>
<dbReference type="InterPro" id="IPR008966">
    <property type="entry name" value="Adhesion_dom_sf"/>
</dbReference>
<dbReference type="InterPro" id="IPR050263">
    <property type="entry name" value="Bact_Fimbrial_Adh_Pro"/>
</dbReference>
<dbReference type="PANTHER" id="PTHR33420">
    <property type="entry name" value="FIMBRIAL SUBUNIT ELFA-RELATED"/>
    <property type="match status" value="1"/>
</dbReference>
<dbReference type="PANTHER" id="PTHR33420:SF31">
    <property type="entry name" value="TYPE 1 FIMBRIN D-MANNOSE SPECIFIC ADHESIN"/>
    <property type="match status" value="1"/>
</dbReference>
<dbReference type="Pfam" id="PF00419">
    <property type="entry name" value="Fimbrial"/>
    <property type="match status" value="1"/>
</dbReference>
<dbReference type="SUPFAM" id="SSF49401">
    <property type="entry name" value="Bacterial adhesins"/>
    <property type="match status" value="1"/>
</dbReference>
<protein>
    <recommendedName>
        <fullName>Putative minor fimbrial subunit PmfE</fullName>
    </recommendedName>
</protein>
<name>PMFE_PROMH</name>
<organism>
    <name type="scientific">Proteus mirabilis (strain HI4320)</name>
    <dbReference type="NCBI Taxonomy" id="529507"/>
    <lineage>
        <taxon>Bacteria</taxon>
        <taxon>Pseudomonadati</taxon>
        <taxon>Pseudomonadota</taxon>
        <taxon>Gammaproteobacteria</taxon>
        <taxon>Enterobacterales</taxon>
        <taxon>Morganellaceae</taxon>
        <taxon>Proteus</taxon>
    </lineage>
</organism>
<comment type="subcellular location">
    <subcellularLocation>
        <location>Fimbrium</location>
    </subcellularLocation>
</comment>
<proteinExistence type="inferred from homology"/>
<reference key="1">
    <citation type="journal article" date="1994" name="Gene">
        <title>Genetic organization and complete sequence of the Proteus mirabilis pmf fimbrial operon.</title>
        <authorList>
            <person name="Massad G."/>
            <person name="Mobley H.L.T."/>
        </authorList>
    </citation>
    <scope>NUCLEOTIDE SEQUENCE [GENOMIC DNA]</scope>
</reference>
<reference key="2">
    <citation type="journal article" date="2008" name="J. Bacteriol.">
        <title>Complete genome sequence of uropathogenic Proteus mirabilis, a master of both adherence and motility.</title>
        <authorList>
            <person name="Pearson M.M."/>
            <person name="Sebaihia M."/>
            <person name="Churcher C."/>
            <person name="Quail M.A."/>
            <person name="Seshasayee A.S."/>
            <person name="Luscombe N.M."/>
            <person name="Abdellah Z."/>
            <person name="Arrosmith C."/>
            <person name="Atkin B."/>
            <person name="Chillingworth T."/>
            <person name="Hauser H."/>
            <person name="Jagels K."/>
            <person name="Moule S."/>
            <person name="Mungall K."/>
            <person name="Norbertczak H."/>
            <person name="Rabbinowitsch E."/>
            <person name="Walker D."/>
            <person name="Whithead S."/>
            <person name="Thomson N.R."/>
            <person name="Rather P.N."/>
            <person name="Parkhill J."/>
            <person name="Mobley H.L.T."/>
        </authorList>
    </citation>
    <scope>NUCLEOTIDE SEQUENCE [LARGE SCALE GENOMIC DNA]</scope>
    <source>
        <strain>HI4320</strain>
    </source>
</reference>
<keyword id="KW-0281">Fimbrium</keyword>
<keyword id="KW-1185">Reference proteome</keyword>
<keyword id="KW-0732">Signal</keyword>
<feature type="signal peptide" evidence="1">
    <location>
        <begin position="1"/>
        <end position="28"/>
    </location>
</feature>
<feature type="chain" id="PRO_0000009234" description="Putative minor fimbrial subunit PmfE">
    <location>
        <begin position="29"/>
        <end position="357"/>
    </location>
</feature>